<feature type="chain" id="PRO_1000079997" description="Exodeoxyribonuclease 7 large subunit">
    <location>
        <begin position="1"/>
        <end position="445"/>
    </location>
</feature>
<name>EX7L_STAAT</name>
<sequence>MSDYLSVSALTKYIKYKFDQDPHLQSVLIKGELSNFKKHSSGHLYFNVKDKESVISAMMFKGSASKLNFEPKEGDEVLLEARVSVFERRGNYQIYVNKMQLDGIGNLYQKLEALKKKLTEEGCFDKANKKSIPKFPKKIAVLTASTGAAIRDIHSTINSRFPLAEQIQISTLVQGEKAKDDIIEKIEYADSLGVDTIIVGRGGGSIEDLWNFNEEAVVRAIYNCKTPIISAVGHETDFTLSDFAADIRAATPTQAAVIATPDQYELLQQIQQYQFTLTRFIKKHLEQQRKHVEHLSSYYKFKQPTLLYDQQIQRRDDLEKRLKQQIQATFEQQRHRLMLLQQRYNLKALLSSVNQEQQNNLQLTNQLVKLLNSKILSYKNDLKNKVENLNNLSPTNTMLRGYAIVNKKDEVITSTKDLTENDQLTLTMKDGLVDAKVTKVRCNND</sequence>
<protein>
    <recommendedName>
        <fullName evidence="1">Exodeoxyribonuclease 7 large subunit</fullName>
        <ecNumber evidence="1">3.1.11.6</ecNumber>
    </recommendedName>
    <alternativeName>
        <fullName evidence="1">Exodeoxyribonuclease VII large subunit</fullName>
        <shortName evidence="1">Exonuclease VII large subunit</shortName>
    </alternativeName>
</protein>
<evidence type="ECO:0000255" key="1">
    <source>
        <dbReference type="HAMAP-Rule" id="MF_00378"/>
    </source>
</evidence>
<proteinExistence type="inferred from homology"/>
<keyword id="KW-0963">Cytoplasm</keyword>
<keyword id="KW-0269">Exonuclease</keyword>
<keyword id="KW-0378">Hydrolase</keyword>
<keyword id="KW-0540">Nuclease</keyword>
<organism>
    <name type="scientific">Staphylococcus aureus (strain USA300 / TCH1516)</name>
    <dbReference type="NCBI Taxonomy" id="451516"/>
    <lineage>
        <taxon>Bacteria</taxon>
        <taxon>Bacillati</taxon>
        <taxon>Bacillota</taxon>
        <taxon>Bacilli</taxon>
        <taxon>Bacillales</taxon>
        <taxon>Staphylococcaceae</taxon>
        <taxon>Staphylococcus</taxon>
    </lineage>
</organism>
<gene>
    <name evidence="1" type="primary">xseA</name>
    <name type="ordered locus">USA300HOU_1525</name>
</gene>
<comment type="function">
    <text evidence="1">Bidirectionally degrades single-stranded DNA into large acid-insoluble oligonucleotides, which are then degraded further into small acid-soluble oligonucleotides.</text>
</comment>
<comment type="catalytic activity">
    <reaction evidence="1">
        <text>Exonucleolytic cleavage in either 5'- to 3'- or 3'- to 5'-direction to yield nucleoside 5'-phosphates.</text>
        <dbReference type="EC" id="3.1.11.6"/>
    </reaction>
</comment>
<comment type="subunit">
    <text evidence="1">Heterooligomer composed of large and small subunits.</text>
</comment>
<comment type="subcellular location">
    <subcellularLocation>
        <location evidence="1">Cytoplasm</location>
    </subcellularLocation>
</comment>
<comment type="similarity">
    <text evidence="1">Belongs to the XseA family.</text>
</comment>
<reference key="1">
    <citation type="journal article" date="2007" name="BMC Microbiol.">
        <title>Subtle genetic changes enhance virulence of methicillin resistant and sensitive Staphylococcus aureus.</title>
        <authorList>
            <person name="Highlander S.K."/>
            <person name="Hulten K.G."/>
            <person name="Qin X."/>
            <person name="Jiang H."/>
            <person name="Yerrapragada S."/>
            <person name="Mason E.O. Jr."/>
            <person name="Shang Y."/>
            <person name="Williams T.M."/>
            <person name="Fortunov R.M."/>
            <person name="Liu Y."/>
            <person name="Igboeli O."/>
            <person name="Petrosino J."/>
            <person name="Tirumalai M."/>
            <person name="Uzman A."/>
            <person name="Fox G.E."/>
            <person name="Cardenas A.M."/>
            <person name="Muzny D.M."/>
            <person name="Hemphill L."/>
            <person name="Ding Y."/>
            <person name="Dugan S."/>
            <person name="Blyth P.R."/>
            <person name="Buhay C.J."/>
            <person name="Dinh H.H."/>
            <person name="Hawes A.C."/>
            <person name="Holder M."/>
            <person name="Kovar C.L."/>
            <person name="Lee S.L."/>
            <person name="Liu W."/>
            <person name="Nazareth L.V."/>
            <person name="Wang Q."/>
            <person name="Zhou J."/>
            <person name="Kaplan S.L."/>
            <person name="Weinstock G.M."/>
        </authorList>
    </citation>
    <scope>NUCLEOTIDE SEQUENCE [LARGE SCALE GENOMIC DNA]</scope>
    <source>
        <strain>USA300 / TCH1516</strain>
    </source>
</reference>
<dbReference type="EC" id="3.1.11.6" evidence="1"/>
<dbReference type="EMBL" id="CP000730">
    <property type="protein sequence ID" value="ABX29532.1"/>
    <property type="molecule type" value="Genomic_DNA"/>
</dbReference>
<dbReference type="RefSeq" id="WP_001286928.1">
    <property type="nucleotide sequence ID" value="NC_010079.1"/>
</dbReference>
<dbReference type="SMR" id="A8Z463"/>
<dbReference type="KEGG" id="sax:USA300HOU_1525"/>
<dbReference type="HOGENOM" id="CLU_023625_3_1_9"/>
<dbReference type="GO" id="GO:0005737">
    <property type="term" value="C:cytoplasm"/>
    <property type="evidence" value="ECO:0007669"/>
    <property type="project" value="UniProtKB-SubCell"/>
</dbReference>
<dbReference type="GO" id="GO:0009318">
    <property type="term" value="C:exodeoxyribonuclease VII complex"/>
    <property type="evidence" value="ECO:0007669"/>
    <property type="project" value="InterPro"/>
</dbReference>
<dbReference type="GO" id="GO:0008855">
    <property type="term" value="F:exodeoxyribonuclease VII activity"/>
    <property type="evidence" value="ECO:0007669"/>
    <property type="project" value="UniProtKB-UniRule"/>
</dbReference>
<dbReference type="GO" id="GO:0003676">
    <property type="term" value="F:nucleic acid binding"/>
    <property type="evidence" value="ECO:0007669"/>
    <property type="project" value="InterPro"/>
</dbReference>
<dbReference type="GO" id="GO:0006308">
    <property type="term" value="P:DNA catabolic process"/>
    <property type="evidence" value="ECO:0007669"/>
    <property type="project" value="UniProtKB-UniRule"/>
</dbReference>
<dbReference type="CDD" id="cd04489">
    <property type="entry name" value="ExoVII_LU_OBF"/>
    <property type="match status" value="1"/>
</dbReference>
<dbReference type="HAMAP" id="MF_00378">
    <property type="entry name" value="Exonuc_7_L"/>
    <property type="match status" value="1"/>
</dbReference>
<dbReference type="InterPro" id="IPR003753">
    <property type="entry name" value="Exonuc_VII_L"/>
</dbReference>
<dbReference type="InterPro" id="IPR020579">
    <property type="entry name" value="Exonuc_VII_lsu_C"/>
</dbReference>
<dbReference type="InterPro" id="IPR025824">
    <property type="entry name" value="OB-fold_nuc-bd_dom"/>
</dbReference>
<dbReference type="NCBIfam" id="TIGR00237">
    <property type="entry name" value="xseA"/>
    <property type="match status" value="1"/>
</dbReference>
<dbReference type="PANTHER" id="PTHR30008">
    <property type="entry name" value="EXODEOXYRIBONUCLEASE 7 LARGE SUBUNIT"/>
    <property type="match status" value="1"/>
</dbReference>
<dbReference type="PANTHER" id="PTHR30008:SF0">
    <property type="entry name" value="EXODEOXYRIBONUCLEASE 7 LARGE SUBUNIT"/>
    <property type="match status" value="1"/>
</dbReference>
<dbReference type="Pfam" id="PF02601">
    <property type="entry name" value="Exonuc_VII_L"/>
    <property type="match status" value="1"/>
</dbReference>
<dbReference type="Pfam" id="PF13742">
    <property type="entry name" value="tRNA_anti_2"/>
    <property type="match status" value="1"/>
</dbReference>
<accession>A8Z463</accession>